<evidence type="ECO:0000250" key="1"/>
<evidence type="ECO:0000250" key="2">
    <source>
        <dbReference type="UniProtKB" id="Q9Y3D7"/>
    </source>
</evidence>
<evidence type="ECO:0000269" key="3">
    <source>
    </source>
</evidence>
<evidence type="ECO:0000305" key="4"/>
<evidence type="ECO:0000305" key="5">
    <source>
    </source>
</evidence>
<evidence type="ECO:0000312" key="6">
    <source>
        <dbReference type="MGI" id="MGI:1913699"/>
    </source>
</evidence>
<evidence type="ECO:0007744" key="7">
    <source>
    </source>
</evidence>
<comment type="function">
    <text evidence="2">Regulates ATP-dependent protein translocation into the mitochondrial matrix. Inhibits DNAJC19 stimulation of HSPA9/Mortalin ATPase activity.</text>
</comment>
<comment type="subunit">
    <text evidence="2 5">Probable component of the PAM complex at least composed of a mitochondrial HSP70 protein, GRPEL1 or GRPEL2, TIMM44, TIMM16/PAM16 and TIMM14/DNAJC19 (By similarity). Interacts with DNAJC19. Directly interacts with DNAJC15; this interaction counteracts DNAJC15-dependent stimulation of HSPA9 ATPase activity (By similarity). Associates with the TIM23 complex (Probable).</text>
</comment>
<comment type="subcellular location">
    <subcellularLocation>
        <location evidence="2">Mitochondrion inner membrane</location>
        <topology evidence="2">Peripheral membrane protein</topology>
        <orientation evidence="2">Matrix side</orientation>
    </subcellularLocation>
</comment>
<comment type="tissue specificity">
    <text evidence="3">Expressed in trabecular bone and cartilage and by differentiated chondrocytes localized in the hypertrophic zone and by osteoblasts at early developmental stages.</text>
</comment>
<comment type="domain">
    <text evidence="1">The J-like region, although related to the J domain does not have co-chaperone activity.</text>
</comment>
<comment type="similarity">
    <text evidence="4">Belongs to the TIM16/PAM16 family.</text>
</comment>
<sequence length="125" mass="13785">MAKYLAQIIVMGVQVVGRAFARALRQEFAASQAAADARGRAGHQSAAASNLSGLSLQEAQQILNVSKLSPEEVQKNYEHLFKVNDKSVGGSFYLQSKVVRAKERLDEELRIQAQEDREKGQKPKT</sequence>
<keyword id="KW-0472">Membrane</keyword>
<keyword id="KW-0496">Mitochondrion</keyword>
<keyword id="KW-0999">Mitochondrion inner membrane</keyword>
<keyword id="KW-0597">Phosphoprotein</keyword>
<keyword id="KW-0653">Protein transport</keyword>
<keyword id="KW-1185">Reference proteome</keyword>
<keyword id="KW-0811">Translocation</keyword>
<keyword id="KW-0813">Transport</keyword>
<dbReference type="EMBL" id="AF349454">
    <property type="protein sequence ID" value="AAL57766.1"/>
    <property type="molecule type" value="mRNA"/>
</dbReference>
<dbReference type="EMBL" id="AY320045">
    <property type="protein sequence ID" value="AAQ86806.1"/>
    <property type="molecule type" value="Genomic_DNA"/>
</dbReference>
<dbReference type="EMBL" id="AB073618">
    <property type="protein sequence ID" value="BAB91135.1"/>
    <property type="molecule type" value="mRNA"/>
</dbReference>
<dbReference type="EMBL" id="AK003227">
    <property type="protein sequence ID" value="BAB22656.1"/>
    <property type="molecule type" value="mRNA"/>
</dbReference>
<dbReference type="EMBL" id="AK008380">
    <property type="protein sequence ID" value="BAB25635.1"/>
    <property type="molecule type" value="mRNA"/>
</dbReference>
<dbReference type="EMBL" id="BC024346">
    <property type="protein sequence ID" value="AAH24346.1"/>
    <property type="molecule type" value="mRNA"/>
</dbReference>
<dbReference type="EMBL" id="BC096419">
    <property type="protein sequence ID" value="AAH96419.1"/>
    <property type="molecule type" value="mRNA"/>
</dbReference>
<dbReference type="CCDS" id="CCDS37241.1"/>
<dbReference type="RefSeq" id="NP_079847.1">
    <property type="nucleotide sequence ID" value="NM_025571.1"/>
</dbReference>
<dbReference type="SMR" id="Q9CQV1"/>
<dbReference type="BioGRID" id="211483">
    <property type="interactions" value="1"/>
</dbReference>
<dbReference type="FunCoup" id="Q9CQV1">
    <property type="interactions" value="1296"/>
</dbReference>
<dbReference type="IntAct" id="Q9CQV1">
    <property type="interactions" value="1"/>
</dbReference>
<dbReference type="STRING" id="10090.ENSMUSP00000014445"/>
<dbReference type="iPTMnet" id="Q9CQV1"/>
<dbReference type="PhosphoSitePlus" id="Q9CQV1"/>
<dbReference type="jPOST" id="Q9CQV1"/>
<dbReference type="PaxDb" id="10090-ENSMUSP00000014445"/>
<dbReference type="PeptideAtlas" id="Q9CQV1"/>
<dbReference type="ProteomicsDB" id="262784"/>
<dbReference type="Pumba" id="Q9CQV1"/>
<dbReference type="TopDownProteomics" id="Q9CQV1"/>
<dbReference type="DNASU" id="66449"/>
<dbReference type="Ensembl" id="ENSMUST00000014445.7">
    <property type="protein sequence ID" value="ENSMUSP00000014445.7"/>
    <property type="gene ID" value="ENSMUSG00000014301.14"/>
</dbReference>
<dbReference type="Ensembl" id="ENSMUST00000057649.8">
    <property type="protein sequence ID" value="ENSMUSP00000137140.2"/>
    <property type="gene ID" value="ENSMUSG00000045886.8"/>
</dbReference>
<dbReference type="GeneID" id="66449"/>
<dbReference type="KEGG" id="mmu:66449"/>
<dbReference type="UCSC" id="uc007xzx.1">
    <property type="organism name" value="mouse"/>
</dbReference>
<dbReference type="AGR" id="MGI:1913699"/>
<dbReference type="CTD" id="51025"/>
<dbReference type="MGI" id="MGI:1913699">
    <property type="gene designation" value="Pam16"/>
</dbReference>
<dbReference type="VEuPathDB" id="HostDB:ENSMUSG00000014301"/>
<dbReference type="VEuPathDB" id="HostDB:ENSMUSG00000045886"/>
<dbReference type="eggNOG" id="KOG3442">
    <property type="taxonomic scope" value="Eukaryota"/>
</dbReference>
<dbReference type="GeneTree" id="ENSGT00390000012037"/>
<dbReference type="HOGENOM" id="CLU_101461_3_0_1"/>
<dbReference type="InParanoid" id="Q9CQV1"/>
<dbReference type="OMA" id="RMFKIND"/>
<dbReference type="OrthoDB" id="10262892at2759"/>
<dbReference type="PhylomeDB" id="Q9CQV1"/>
<dbReference type="TreeFam" id="TF315134"/>
<dbReference type="BioGRID-ORCS" id="66449">
    <property type="hits" value="27 hits in 76 CRISPR screens"/>
</dbReference>
<dbReference type="PRO" id="PR:Q9CQV1"/>
<dbReference type="Proteomes" id="UP000000589">
    <property type="component" value="Chromosome 10"/>
</dbReference>
<dbReference type="Proteomes" id="UP000000589">
    <property type="component" value="Chromosome 16"/>
</dbReference>
<dbReference type="RNAct" id="Q9CQV1">
    <property type="molecule type" value="protein"/>
</dbReference>
<dbReference type="Bgee" id="ENSMUSG00000014301">
    <property type="expression patterns" value="Expressed in primary oocyte and 69 other cell types or tissues"/>
</dbReference>
<dbReference type="ExpressionAtlas" id="Q9CQV1">
    <property type="expression patterns" value="baseline and differential"/>
</dbReference>
<dbReference type="GO" id="GO:0005737">
    <property type="term" value="C:cytoplasm"/>
    <property type="evidence" value="ECO:0000314"/>
    <property type="project" value="MGI"/>
</dbReference>
<dbReference type="GO" id="GO:0005743">
    <property type="term" value="C:mitochondrial inner membrane"/>
    <property type="evidence" value="ECO:0007005"/>
    <property type="project" value="MGI"/>
</dbReference>
<dbReference type="GO" id="GO:0005739">
    <property type="term" value="C:mitochondrion"/>
    <property type="evidence" value="ECO:0000314"/>
    <property type="project" value="MGI"/>
</dbReference>
<dbReference type="GO" id="GO:0001405">
    <property type="term" value="C:PAM complex, Tim23 associated import motor"/>
    <property type="evidence" value="ECO:0000314"/>
    <property type="project" value="UniProtKB"/>
</dbReference>
<dbReference type="GO" id="GO:0071897">
    <property type="term" value="P:DNA biosynthetic process"/>
    <property type="evidence" value="ECO:0000315"/>
    <property type="project" value="MGI"/>
</dbReference>
<dbReference type="GO" id="GO:2001234">
    <property type="term" value="P:negative regulation of apoptotic signaling pathway"/>
    <property type="evidence" value="ECO:0000315"/>
    <property type="project" value="MGI"/>
</dbReference>
<dbReference type="GO" id="GO:0001503">
    <property type="term" value="P:ossification"/>
    <property type="evidence" value="ECO:0000250"/>
    <property type="project" value="UniProtKB"/>
</dbReference>
<dbReference type="GO" id="GO:0030150">
    <property type="term" value="P:protein import into mitochondrial matrix"/>
    <property type="evidence" value="ECO:0007669"/>
    <property type="project" value="InterPro"/>
</dbReference>
<dbReference type="FunFam" id="1.10.287.110:FF:000006">
    <property type="entry name" value="Import inner membrane translocase subunit TIM16"/>
    <property type="match status" value="1"/>
</dbReference>
<dbReference type="Gene3D" id="1.10.287.110">
    <property type="entry name" value="DnaJ domain"/>
    <property type="match status" value="1"/>
</dbReference>
<dbReference type="InterPro" id="IPR036869">
    <property type="entry name" value="J_dom_sf"/>
</dbReference>
<dbReference type="InterPro" id="IPR005341">
    <property type="entry name" value="Tim16"/>
</dbReference>
<dbReference type="PANTHER" id="PTHR12388">
    <property type="entry name" value="MITOCHONDRIA ASSOCIATED GRANULOCYTE MACROPHAGE CSF SIGNALING MOLECULE"/>
    <property type="match status" value="1"/>
</dbReference>
<dbReference type="PANTHER" id="PTHR12388:SF0">
    <property type="entry name" value="MITOCHONDRIAL IMPORT INNER MEMBRANE TRANSLOCASE SUBUNIT TIM16"/>
    <property type="match status" value="1"/>
</dbReference>
<dbReference type="Pfam" id="PF03656">
    <property type="entry name" value="Pam16"/>
    <property type="match status" value="1"/>
</dbReference>
<feature type="chain" id="PRO_0000214079" description="Mitochondrial import inner membrane translocase subunit TIM16">
    <location>
        <begin position="1"/>
        <end position="125"/>
    </location>
</feature>
<feature type="region of interest" description="J-like">
    <location>
        <begin position="58"/>
        <end position="110"/>
    </location>
</feature>
<feature type="modified residue" description="Phosphoserine" evidence="7">
    <location>
        <position position="69"/>
    </location>
</feature>
<proteinExistence type="evidence at protein level"/>
<accession>Q9CQV1</accession>
<accession>Q6EIX1</accession>
<name>TIM16_MOUSE</name>
<gene>
    <name evidence="6" type="primary">Pam16</name>
    <name type="synonym">Magmas</name>
    <name type="synonym">Tim16</name>
    <name type="synonym">Timm16</name>
</gene>
<reference key="1">
    <citation type="journal article" date="2001" name="Exp. Hematol.">
        <title>Identification and characterization of Magmas, a novel mitochondria-associated protein involved in granulocyte-macrophage colony-stimulating factor signal transduction.</title>
        <authorList>
            <person name="Jubinsky P.T."/>
            <person name="Messer A."/>
            <person name="Bender J."/>
            <person name="Morris R.E."/>
            <person name="Ciraolo G.M."/>
            <person name="Witte D.P."/>
            <person name="Hawley R.G."/>
            <person name="Short M.K."/>
        </authorList>
    </citation>
    <scope>NUCLEOTIDE SEQUENCE [MRNA]</scope>
    <source>
        <strain>BALB/cJ</strain>
    </source>
</reference>
<reference key="2">
    <citation type="journal article" date="2005" name="In Silico Biol.">
        <title>Magmas gene structure and evolution.</title>
        <authorList>
            <person name="Peng J."/>
            <person name="Huang C.-H."/>
            <person name="Short M.K."/>
            <person name="Jubinsky P.T."/>
        </authorList>
    </citation>
    <scope>NUCLEOTIDE SEQUENCE [GENOMIC DNA]</scope>
</reference>
<reference key="3">
    <citation type="submission" date="2001-10" db="EMBL/GenBank/DDBJ databases">
        <authorList>
            <person name="Hoshino J."/>
            <person name="Aruga J."/>
            <person name="Mikoshiba K."/>
        </authorList>
    </citation>
    <scope>NUCLEOTIDE SEQUENCE [MRNA]</scope>
    <source>
        <strain>ICR</strain>
        <tissue>Cerebellum</tissue>
    </source>
</reference>
<reference key="4">
    <citation type="journal article" date="2005" name="Science">
        <title>The transcriptional landscape of the mammalian genome.</title>
        <authorList>
            <person name="Carninci P."/>
            <person name="Kasukawa T."/>
            <person name="Katayama S."/>
            <person name="Gough J."/>
            <person name="Frith M.C."/>
            <person name="Maeda N."/>
            <person name="Oyama R."/>
            <person name="Ravasi T."/>
            <person name="Lenhard B."/>
            <person name="Wells C."/>
            <person name="Kodzius R."/>
            <person name="Shimokawa K."/>
            <person name="Bajic V.B."/>
            <person name="Brenner S.E."/>
            <person name="Batalov S."/>
            <person name="Forrest A.R."/>
            <person name="Zavolan M."/>
            <person name="Davis M.J."/>
            <person name="Wilming L.G."/>
            <person name="Aidinis V."/>
            <person name="Allen J.E."/>
            <person name="Ambesi-Impiombato A."/>
            <person name="Apweiler R."/>
            <person name="Aturaliya R.N."/>
            <person name="Bailey T.L."/>
            <person name="Bansal M."/>
            <person name="Baxter L."/>
            <person name="Beisel K.W."/>
            <person name="Bersano T."/>
            <person name="Bono H."/>
            <person name="Chalk A.M."/>
            <person name="Chiu K.P."/>
            <person name="Choudhary V."/>
            <person name="Christoffels A."/>
            <person name="Clutterbuck D.R."/>
            <person name="Crowe M.L."/>
            <person name="Dalla E."/>
            <person name="Dalrymple B.P."/>
            <person name="de Bono B."/>
            <person name="Della Gatta G."/>
            <person name="di Bernardo D."/>
            <person name="Down T."/>
            <person name="Engstrom P."/>
            <person name="Fagiolini M."/>
            <person name="Faulkner G."/>
            <person name="Fletcher C.F."/>
            <person name="Fukushima T."/>
            <person name="Furuno M."/>
            <person name="Futaki S."/>
            <person name="Gariboldi M."/>
            <person name="Georgii-Hemming P."/>
            <person name="Gingeras T.R."/>
            <person name="Gojobori T."/>
            <person name="Green R.E."/>
            <person name="Gustincich S."/>
            <person name="Harbers M."/>
            <person name="Hayashi Y."/>
            <person name="Hensch T.K."/>
            <person name="Hirokawa N."/>
            <person name="Hill D."/>
            <person name="Huminiecki L."/>
            <person name="Iacono M."/>
            <person name="Ikeo K."/>
            <person name="Iwama A."/>
            <person name="Ishikawa T."/>
            <person name="Jakt M."/>
            <person name="Kanapin A."/>
            <person name="Katoh M."/>
            <person name="Kawasawa Y."/>
            <person name="Kelso J."/>
            <person name="Kitamura H."/>
            <person name="Kitano H."/>
            <person name="Kollias G."/>
            <person name="Krishnan S.P."/>
            <person name="Kruger A."/>
            <person name="Kummerfeld S.K."/>
            <person name="Kurochkin I.V."/>
            <person name="Lareau L.F."/>
            <person name="Lazarevic D."/>
            <person name="Lipovich L."/>
            <person name="Liu J."/>
            <person name="Liuni S."/>
            <person name="McWilliam S."/>
            <person name="Madan Babu M."/>
            <person name="Madera M."/>
            <person name="Marchionni L."/>
            <person name="Matsuda H."/>
            <person name="Matsuzawa S."/>
            <person name="Miki H."/>
            <person name="Mignone F."/>
            <person name="Miyake S."/>
            <person name="Morris K."/>
            <person name="Mottagui-Tabar S."/>
            <person name="Mulder N."/>
            <person name="Nakano N."/>
            <person name="Nakauchi H."/>
            <person name="Ng P."/>
            <person name="Nilsson R."/>
            <person name="Nishiguchi S."/>
            <person name="Nishikawa S."/>
            <person name="Nori F."/>
            <person name="Ohara O."/>
            <person name="Okazaki Y."/>
            <person name="Orlando V."/>
            <person name="Pang K.C."/>
            <person name="Pavan W.J."/>
            <person name="Pavesi G."/>
            <person name="Pesole G."/>
            <person name="Petrovsky N."/>
            <person name="Piazza S."/>
            <person name="Reed J."/>
            <person name="Reid J.F."/>
            <person name="Ring B.Z."/>
            <person name="Ringwald M."/>
            <person name="Rost B."/>
            <person name="Ruan Y."/>
            <person name="Salzberg S.L."/>
            <person name="Sandelin A."/>
            <person name="Schneider C."/>
            <person name="Schoenbach C."/>
            <person name="Sekiguchi K."/>
            <person name="Semple C.A."/>
            <person name="Seno S."/>
            <person name="Sessa L."/>
            <person name="Sheng Y."/>
            <person name="Shibata Y."/>
            <person name="Shimada H."/>
            <person name="Shimada K."/>
            <person name="Silva D."/>
            <person name="Sinclair B."/>
            <person name="Sperling S."/>
            <person name="Stupka E."/>
            <person name="Sugiura K."/>
            <person name="Sultana R."/>
            <person name="Takenaka Y."/>
            <person name="Taki K."/>
            <person name="Tammoja K."/>
            <person name="Tan S.L."/>
            <person name="Tang S."/>
            <person name="Taylor M.S."/>
            <person name="Tegner J."/>
            <person name="Teichmann S.A."/>
            <person name="Ueda H.R."/>
            <person name="van Nimwegen E."/>
            <person name="Verardo R."/>
            <person name="Wei C.L."/>
            <person name="Yagi K."/>
            <person name="Yamanishi H."/>
            <person name="Zabarovsky E."/>
            <person name="Zhu S."/>
            <person name="Zimmer A."/>
            <person name="Hide W."/>
            <person name="Bult C."/>
            <person name="Grimmond S.M."/>
            <person name="Teasdale R.D."/>
            <person name="Liu E.T."/>
            <person name="Brusic V."/>
            <person name="Quackenbush J."/>
            <person name="Wahlestedt C."/>
            <person name="Mattick J.S."/>
            <person name="Hume D.A."/>
            <person name="Kai C."/>
            <person name="Sasaki D."/>
            <person name="Tomaru Y."/>
            <person name="Fukuda S."/>
            <person name="Kanamori-Katayama M."/>
            <person name="Suzuki M."/>
            <person name="Aoki J."/>
            <person name="Arakawa T."/>
            <person name="Iida J."/>
            <person name="Imamura K."/>
            <person name="Itoh M."/>
            <person name="Kato T."/>
            <person name="Kawaji H."/>
            <person name="Kawagashira N."/>
            <person name="Kawashima T."/>
            <person name="Kojima M."/>
            <person name="Kondo S."/>
            <person name="Konno H."/>
            <person name="Nakano K."/>
            <person name="Ninomiya N."/>
            <person name="Nishio T."/>
            <person name="Okada M."/>
            <person name="Plessy C."/>
            <person name="Shibata K."/>
            <person name="Shiraki T."/>
            <person name="Suzuki S."/>
            <person name="Tagami M."/>
            <person name="Waki K."/>
            <person name="Watahiki A."/>
            <person name="Okamura-Oho Y."/>
            <person name="Suzuki H."/>
            <person name="Kawai J."/>
            <person name="Hayashizaki Y."/>
        </authorList>
    </citation>
    <scope>NUCLEOTIDE SEQUENCE [LARGE SCALE MRNA]</scope>
    <source>
        <strain>C57BL/6J</strain>
        <tissue>Embryo</tissue>
        <tissue>Small intestine</tissue>
    </source>
</reference>
<reference key="5">
    <citation type="journal article" date="2004" name="Genome Res.">
        <title>The status, quality, and expansion of the NIH full-length cDNA project: the Mammalian Gene Collection (MGC).</title>
        <authorList>
            <consortium name="The MGC Project Team"/>
        </authorList>
    </citation>
    <scope>NUCLEOTIDE SEQUENCE [LARGE SCALE MRNA]</scope>
    <source>
        <tissue>Colon</tissue>
        <tissue>Mammary gland</tissue>
    </source>
</reference>
<reference key="6">
    <citation type="journal article" date="2010" name="Cell">
        <title>A tissue-specific atlas of mouse protein phosphorylation and expression.</title>
        <authorList>
            <person name="Huttlin E.L."/>
            <person name="Jedrychowski M.P."/>
            <person name="Elias J.E."/>
            <person name="Goswami T."/>
            <person name="Rad R."/>
            <person name="Beausoleil S.A."/>
            <person name="Villen J."/>
            <person name="Haas W."/>
            <person name="Sowa M.E."/>
            <person name="Gygi S.P."/>
        </authorList>
    </citation>
    <scope>PHOSPHORYLATION [LARGE SCALE ANALYSIS] AT SER-69</scope>
    <scope>IDENTIFICATION BY MASS SPECTROMETRY [LARGE SCALE ANALYSIS]</scope>
    <source>
        <tissue>Brain</tissue>
        <tissue>Brown adipose tissue</tissue>
        <tissue>Heart</tissue>
        <tissue>Kidney</tissue>
        <tissue>Liver</tissue>
        <tissue>Pancreas</tissue>
        <tissue>Spleen</tissue>
        <tissue>Testis</tissue>
    </source>
</reference>
<reference key="7">
    <citation type="journal article" date="2014" name="Cell Metab.">
        <title>DNAJC19, a mitochondrial cochaperone associated with cardiomyopathy, forms a complex with prohibitins to regulate cardiolipin remodeling.</title>
        <authorList>
            <person name="Richter-Dennerlein R."/>
            <person name="Korwitz A."/>
            <person name="Haag M."/>
            <person name="Tatsuta T."/>
            <person name="Dargazanli S."/>
            <person name="Baker M."/>
            <person name="Decker T."/>
            <person name="Lamkemeyer T."/>
            <person name="Rugarli E.I."/>
            <person name="Langer T."/>
        </authorList>
    </citation>
    <scope>SUBCELLULAR LOCATION</scope>
    <scope>INTERACTION WITH DNAJC19 AND TIMM44</scope>
</reference>
<reference key="8">
    <citation type="journal article" date="2014" name="PLoS Genet.">
        <title>The impairment of MAGMAS function in human is responsible for a severe skeletal dysplasia.</title>
        <authorList>
            <person name="Mehawej C."/>
            <person name="Delahodde A."/>
            <person name="Legeai-Mallet L."/>
            <person name="Delague V."/>
            <person name="Kaci N."/>
            <person name="Desvignes J.P."/>
            <person name="Kibar Z."/>
            <person name="Capo-Chichi J.M."/>
            <person name="Chouery E."/>
            <person name="Munnich A."/>
            <person name="Cormier-Daire V."/>
            <person name="Megarbane A."/>
        </authorList>
    </citation>
    <scope>TISSUE SPECIFICITY</scope>
</reference>
<protein>
    <recommendedName>
        <fullName evidence="4">Mitochondrial import inner membrane translocase subunit TIM16</fullName>
    </recommendedName>
    <alternativeName>
        <fullName>Mitochondria-associated granulocyte macrophage CSF-signaling molecule</fullName>
    </alternativeName>
    <alternativeName>
        <fullName>Presequence translocated-associated motor subunit PAM16</fullName>
    </alternativeName>
</protein>
<organism>
    <name type="scientific">Mus musculus</name>
    <name type="common">Mouse</name>
    <dbReference type="NCBI Taxonomy" id="10090"/>
    <lineage>
        <taxon>Eukaryota</taxon>
        <taxon>Metazoa</taxon>
        <taxon>Chordata</taxon>
        <taxon>Craniata</taxon>
        <taxon>Vertebrata</taxon>
        <taxon>Euteleostomi</taxon>
        <taxon>Mammalia</taxon>
        <taxon>Eutheria</taxon>
        <taxon>Euarchontoglires</taxon>
        <taxon>Glires</taxon>
        <taxon>Rodentia</taxon>
        <taxon>Myomorpha</taxon>
        <taxon>Muroidea</taxon>
        <taxon>Muridae</taxon>
        <taxon>Murinae</taxon>
        <taxon>Mus</taxon>
        <taxon>Mus</taxon>
    </lineage>
</organism>